<comment type="function">
    <text evidence="4">Has glycerol-3-phosphate dehydrogenase activity.</text>
</comment>
<comment type="catalytic activity">
    <reaction evidence="4">
        <text>sn-glycerol 3-phosphate + NAD(+) = dihydroxyacetone phosphate + NADH + H(+)</text>
        <dbReference type="Rhea" id="RHEA:11092"/>
        <dbReference type="ChEBI" id="CHEBI:15378"/>
        <dbReference type="ChEBI" id="CHEBI:57540"/>
        <dbReference type="ChEBI" id="CHEBI:57597"/>
        <dbReference type="ChEBI" id="CHEBI:57642"/>
        <dbReference type="ChEBI" id="CHEBI:57945"/>
        <dbReference type="EC" id="1.1.1.8"/>
    </reaction>
    <physiologicalReaction direction="left-to-right" evidence="4">
        <dbReference type="Rhea" id="RHEA:11093"/>
    </physiologicalReaction>
</comment>
<comment type="subunit">
    <text evidence="1">Homodimer.</text>
</comment>
<comment type="subcellular location">
    <subcellularLocation>
        <location evidence="4">Cytoplasm</location>
    </subcellularLocation>
</comment>
<comment type="similarity">
    <text evidence="6">Belongs to the NAD-dependent glycerol-3-phosphate dehydrogenase family.</text>
</comment>
<dbReference type="EC" id="1.1.1.8" evidence="4"/>
<dbReference type="EMBL" id="BT020681">
    <property type="protein sequence ID" value="AAX08698.1"/>
    <property type="molecule type" value="mRNA"/>
</dbReference>
<dbReference type="EMBL" id="BC105513">
    <property type="protein sequence ID" value="AAI05514.1"/>
    <property type="molecule type" value="mRNA"/>
</dbReference>
<dbReference type="RefSeq" id="NP_001030431.1">
    <property type="nucleotide sequence ID" value="NM_001035354.1"/>
</dbReference>
<dbReference type="SMR" id="Q5EA88"/>
<dbReference type="FunCoup" id="Q5EA88">
    <property type="interactions" value="904"/>
</dbReference>
<dbReference type="STRING" id="9913.ENSBTAP00000021683"/>
<dbReference type="PaxDb" id="9913-ENSBTAP00000021683"/>
<dbReference type="PeptideAtlas" id="Q5EA88"/>
<dbReference type="GeneID" id="525042"/>
<dbReference type="KEGG" id="bta:525042"/>
<dbReference type="CTD" id="2819"/>
<dbReference type="eggNOG" id="KOG2711">
    <property type="taxonomic scope" value="Eukaryota"/>
</dbReference>
<dbReference type="HOGENOM" id="CLU_033449_2_2_1"/>
<dbReference type="InParanoid" id="Q5EA88"/>
<dbReference type="OrthoDB" id="10263760at2759"/>
<dbReference type="TreeFam" id="TF300836"/>
<dbReference type="Proteomes" id="UP000009136">
    <property type="component" value="Unplaced"/>
</dbReference>
<dbReference type="GO" id="GO:0005829">
    <property type="term" value="C:cytosol"/>
    <property type="evidence" value="ECO:0000250"/>
    <property type="project" value="AgBase"/>
</dbReference>
<dbReference type="GO" id="GO:0141152">
    <property type="term" value="F:glycerol-3-phosphate dehydrogenase (NAD+) activity"/>
    <property type="evidence" value="ECO:0007669"/>
    <property type="project" value="UniProtKB-EC"/>
</dbReference>
<dbReference type="GO" id="GO:0004368">
    <property type="term" value="F:glycerol-3-phosphate dehydrogenase (quinone) activity"/>
    <property type="evidence" value="ECO:0000250"/>
    <property type="project" value="AgBase"/>
</dbReference>
<dbReference type="GO" id="GO:0051287">
    <property type="term" value="F:NAD binding"/>
    <property type="evidence" value="ECO:0007669"/>
    <property type="project" value="InterPro"/>
</dbReference>
<dbReference type="GO" id="GO:0042803">
    <property type="term" value="F:protein homodimerization activity"/>
    <property type="evidence" value="ECO:0007669"/>
    <property type="project" value="InterPro"/>
</dbReference>
<dbReference type="GO" id="GO:0005975">
    <property type="term" value="P:carbohydrate metabolic process"/>
    <property type="evidence" value="ECO:0000250"/>
    <property type="project" value="AgBase"/>
</dbReference>
<dbReference type="GO" id="GO:0006094">
    <property type="term" value="P:gluconeogenesis"/>
    <property type="evidence" value="ECO:0000250"/>
    <property type="project" value="AgBase"/>
</dbReference>
<dbReference type="GO" id="GO:0046168">
    <property type="term" value="P:glycerol-3-phosphate catabolic process"/>
    <property type="evidence" value="ECO:0007669"/>
    <property type="project" value="InterPro"/>
</dbReference>
<dbReference type="GO" id="GO:0006072">
    <property type="term" value="P:glycerol-3-phosphate metabolic process"/>
    <property type="evidence" value="ECO:0000250"/>
    <property type="project" value="AgBase"/>
</dbReference>
<dbReference type="FunFam" id="3.40.50.720:FF:000088">
    <property type="entry name" value="Glycerol-3-phosphate dehydrogenase [NAD(+)]"/>
    <property type="match status" value="1"/>
</dbReference>
<dbReference type="FunFam" id="1.10.1040.10:FF:000084">
    <property type="entry name" value="Glycerol-3-phosphate dehydrogenase [NAD(+)], cytoplasmic"/>
    <property type="match status" value="1"/>
</dbReference>
<dbReference type="Gene3D" id="1.10.1040.10">
    <property type="entry name" value="N-(1-d-carboxylethyl)-l-norvaline Dehydrogenase, domain 2"/>
    <property type="match status" value="1"/>
</dbReference>
<dbReference type="Gene3D" id="3.40.50.720">
    <property type="entry name" value="NAD(P)-binding Rossmann-like Domain"/>
    <property type="match status" value="1"/>
</dbReference>
<dbReference type="InterPro" id="IPR008927">
    <property type="entry name" value="6-PGluconate_DH-like_C_sf"/>
</dbReference>
<dbReference type="InterPro" id="IPR013328">
    <property type="entry name" value="6PGD_dom2"/>
</dbReference>
<dbReference type="InterPro" id="IPR006168">
    <property type="entry name" value="G3P_DH_NAD-dep"/>
</dbReference>
<dbReference type="InterPro" id="IPR006109">
    <property type="entry name" value="G3P_DH_NAD-dep_C"/>
</dbReference>
<dbReference type="InterPro" id="IPR017751">
    <property type="entry name" value="G3P_DH_NAD-dep_euk"/>
</dbReference>
<dbReference type="InterPro" id="IPR011128">
    <property type="entry name" value="G3P_DH_NAD-dep_N"/>
</dbReference>
<dbReference type="InterPro" id="IPR036291">
    <property type="entry name" value="NAD(P)-bd_dom_sf"/>
</dbReference>
<dbReference type="NCBIfam" id="TIGR03376">
    <property type="entry name" value="glycerol3P_DH"/>
    <property type="match status" value="1"/>
</dbReference>
<dbReference type="PANTHER" id="PTHR11728">
    <property type="entry name" value="GLYCEROL-3-PHOSPHATE DEHYDROGENASE"/>
    <property type="match status" value="1"/>
</dbReference>
<dbReference type="PANTHER" id="PTHR11728:SF32">
    <property type="entry name" value="GLYCEROL-3-PHOSPHATE DEHYDROGENASE [NAD(+)], CYTOPLASMIC"/>
    <property type="match status" value="1"/>
</dbReference>
<dbReference type="Pfam" id="PF07479">
    <property type="entry name" value="NAD_Gly3P_dh_C"/>
    <property type="match status" value="1"/>
</dbReference>
<dbReference type="Pfam" id="PF01210">
    <property type="entry name" value="NAD_Gly3P_dh_N"/>
    <property type="match status" value="1"/>
</dbReference>
<dbReference type="PIRSF" id="PIRSF000114">
    <property type="entry name" value="Glycerol-3-P_dh"/>
    <property type="match status" value="1"/>
</dbReference>
<dbReference type="PRINTS" id="PR00077">
    <property type="entry name" value="GPDHDRGNASE"/>
</dbReference>
<dbReference type="SUPFAM" id="SSF48179">
    <property type="entry name" value="6-phosphogluconate dehydrogenase C-terminal domain-like"/>
    <property type="match status" value="1"/>
</dbReference>
<dbReference type="SUPFAM" id="SSF51735">
    <property type="entry name" value="NAD(P)-binding Rossmann-fold domains"/>
    <property type="match status" value="1"/>
</dbReference>
<dbReference type="PROSITE" id="PS00957">
    <property type="entry name" value="NAD_G3PDH"/>
    <property type="match status" value="1"/>
</dbReference>
<feature type="chain" id="PRO_0000262289" description="Glycerol-3-phosphate dehydrogenase [NAD(+)], cytoplasmic">
    <location>
        <begin position="1"/>
        <end position="349"/>
    </location>
</feature>
<feature type="active site" description="Proton acceptor" evidence="5">
    <location>
        <position position="204"/>
    </location>
</feature>
<feature type="binding site" evidence="4">
    <location>
        <begin position="10"/>
        <end position="15"/>
    </location>
    <ligand>
        <name>NAD(+)</name>
        <dbReference type="ChEBI" id="CHEBI:57540"/>
    </ligand>
</feature>
<feature type="binding site" evidence="1">
    <location>
        <position position="120"/>
    </location>
    <ligand>
        <name>substrate</name>
    </ligand>
</feature>
<feature type="binding site" evidence="4">
    <location>
        <position position="153"/>
    </location>
    <ligand>
        <name>NAD(+)</name>
        <dbReference type="ChEBI" id="CHEBI:57540"/>
    </ligand>
</feature>
<feature type="binding site" evidence="1">
    <location>
        <begin position="269"/>
        <end position="270"/>
    </location>
    <ligand>
        <name>substrate</name>
    </ligand>
</feature>
<feature type="binding site" evidence="4">
    <location>
        <position position="269"/>
    </location>
    <ligand>
        <name>NAD(+)</name>
        <dbReference type="ChEBI" id="CHEBI:57540"/>
    </ligand>
</feature>
<feature type="binding site" evidence="4">
    <location>
        <position position="296"/>
    </location>
    <ligand>
        <name>NAD(+)</name>
        <dbReference type="ChEBI" id="CHEBI:57540"/>
    </ligand>
</feature>
<feature type="binding site" evidence="4">
    <location>
        <position position="298"/>
    </location>
    <ligand>
        <name>NAD(+)</name>
        <dbReference type="ChEBI" id="CHEBI:57540"/>
    </ligand>
</feature>
<feature type="modified residue" description="N6-succinyllysine" evidence="3">
    <location>
        <position position="289"/>
    </location>
</feature>
<feature type="modified residue" description="Phosphotyrosine" evidence="2">
    <location>
        <position position="326"/>
    </location>
</feature>
<feature type="sequence conflict" description="In Ref. 1; AAX08698." evidence="6" ref="1">
    <original>V</original>
    <variation>L</variation>
    <location>
        <position position="122"/>
    </location>
</feature>
<feature type="sequence conflict" description="In Ref. 1; AAX08698." evidence="6" ref="1">
    <original>K</original>
    <variation>R</variation>
    <location>
        <position position="313"/>
    </location>
</feature>
<reference key="1">
    <citation type="journal article" date="2005" name="BMC Genomics">
        <title>Characterization of 954 bovine full-CDS cDNA sequences.</title>
        <authorList>
            <person name="Harhay G.P."/>
            <person name="Sonstegard T.S."/>
            <person name="Keele J.W."/>
            <person name="Heaton M.P."/>
            <person name="Clawson M.L."/>
            <person name="Snelling W.M."/>
            <person name="Wiedmann R.T."/>
            <person name="Van Tassell C.P."/>
            <person name="Smith T.P.L."/>
        </authorList>
    </citation>
    <scope>NUCLEOTIDE SEQUENCE [LARGE SCALE MRNA]</scope>
</reference>
<reference key="2">
    <citation type="submission" date="2005-09" db="EMBL/GenBank/DDBJ databases">
        <authorList>
            <consortium name="NIH - Mammalian Gene Collection (MGC) project"/>
        </authorList>
    </citation>
    <scope>NUCLEOTIDE SEQUENCE [LARGE SCALE MRNA] OF 7-349</scope>
    <source>
        <strain>Hereford</strain>
        <tissue>Ascending colon</tissue>
    </source>
</reference>
<sequence>MTGKKVCIVGSGNWGSAIAKIVGGNAAQLAHFDPRVTMWVFEEDIGGRKLTEIINTQHENVKYLPGHKLPPNVVAVPDVVQAAADADILIFVVPHQFIGKICDQLKGHLKADTIGVSLIKGVDEGPKGLKLISEVIGERLGIPMSVLMGANIANEVADEKFCETTIGSKNQAHGQLLKELMQTPNFRITVVQEVDTVEICGALKNIVAVGAGFCDGLGFGDNTKAAVIRLGLMEMIAFAKLFCSGSVSSATFLESCGVADLITTCYGGRNRKVAEAFARTGKSIEQLEKEMLNGQKLQGPQTARELHSILQHKGMVDKFPLFTAVYKVCYENQPVGEFIHCLQNHPEHV</sequence>
<protein>
    <recommendedName>
        <fullName>Glycerol-3-phosphate dehydrogenase [NAD(+)], cytoplasmic</fullName>
        <shortName>GPD-C</shortName>
        <shortName>GPDH-C</shortName>
        <ecNumber evidence="4">1.1.1.8</ecNumber>
    </recommendedName>
</protein>
<proteinExistence type="evidence at transcript level"/>
<evidence type="ECO:0000250" key="1"/>
<evidence type="ECO:0000250" key="2">
    <source>
        <dbReference type="UniProtKB" id="O35077"/>
    </source>
</evidence>
<evidence type="ECO:0000250" key="3">
    <source>
        <dbReference type="UniProtKB" id="P13707"/>
    </source>
</evidence>
<evidence type="ECO:0000250" key="4">
    <source>
        <dbReference type="UniProtKB" id="P21695"/>
    </source>
</evidence>
<evidence type="ECO:0000255" key="5"/>
<evidence type="ECO:0000305" key="6"/>
<organism>
    <name type="scientific">Bos taurus</name>
    <name type="common">Bovine</name>
    <dbReference type="NCBI Taxonomy" id="9913"/>
    <lineage>
        <taxon>Eukaryota</taxon>
        <taxon>Metazoa</taxon>
        <taxon>Chordata</taxon>
        <taxon>Craniata</taxon>
        <taxon>Vertebrata</taxon>
        <taxon>Euteleostomi</taxon>
        <taxon>Mammalia</taxon>
        <taxon>Eutheria</taxon>
        <taxon>Laurasiatheria</taxon>
        <taxon>Artiodactyla</taxon>
        <taxon>Ruminantia</taxon>
        <taxon>Pecora</taxon>
        <taxon>Bovidae</taxon>
        <taxon>Bovinae</taxon>
        <taxon>Bos</taxon>
    </lineage>
</organism>
<keyword id="KW-0963">Cytoplasm</keyword>
<keyword id="KW-0520">NAD</keyword>
<keyword id="KW-0560">Oxidoreductase</keyword>
<keyword id="KW-0597">Phosphoprotein</keyword>
<keyword id="KW-1185">Reference proteome</keyword>
<name>GPDA_BOVIN</name>
<accession>Q5EA88</accession>
<accession>Q2HJE6</accession>
<gene>
    <name type="primary">GPD1</name>
</gene>